<accession>B1KSQ8</accession>
<proteinExistence type="inferred from homology"/>
<dbReference type="EC" id="2.7.1.21" evidence="1"/>
<dbReference type="EMBL" id="CP000962">
    <property type="protein sequence ID" value="ACA56883.1"/>
    <property type="molecule type" value="Genomic_DNA"/>
</dbReference>
<dbReference type="RefSeq" id="WP_012344692.1">
    <property type="nucleotide sequence ID" value="NC_010520.1"/>
</dbReference>
<dbReference type="SMR" id="B1KSQ8"/>
<dbReference type="KEGG" id="cbl:CLK_3311"/>
<dbReference type="HOGENOM" id="CLU_064400_3_0_9"/>
<dbReference type="GO" id="GO:0005829">
    <property type="term" value="C:cytosol"/>
    <property type="evidence" value="ECO:0007669"/>
    <property type="project" value="TreeGrafter"/>
</dbReference>
<dbReference type="GO" id="GO:0005524">
    <property type="term" value="F:ATP binding"/>
    <property type="evidence" value="ECO:0007669"/>
    <property type="project" value="UniProtKB-UniRule"/>
</dbReference>
<dbReference type="GO" id="GO:0004797">
    <property type="term" value="F:thymidine kinase activity"/>
    <property type="evidence" value="ECO:0007669"/>
    <property type="project" value="UniProtKB-UniRule"/>
</dbReference>
<dbReference type="GO" id="GO:0008270">
    <property type="term" value="F:zinc ion binding"/>
    <property type="evidence" value="ECO:0007669"/>
    <property type="project" value="UniProtKB-UniRule"/>
</dbReference>
<dbReference type="GO" id="GO:0071897">
    <property type="term" value="P:DNA biosynthetic process"/>
    <property type="evidence" value="ECO:0007669"/>
    <property type="project" value="UniProtKB-KW"/>
</dbReference>
<dbReference type="GO" id="GO:0046104">
    <property type="term" value="P:thymidine metabolic process"/>
    <property type="evidence" value="ECO:0007669"/>
    <property type="project" value="TreeGrafter"/>
</dbReference>
<dbReference type="FunFam" id="3.30.60.20:FF:000026">
    <property type="entry name" value="Thymidine kinase"/>
    <property type="match status" value="1"/>
</dbReference>
<dbReference type="FunFam" id="3.40.50.300:FF:000384">
    <property type="entry name" value="Thymidine kinase"/>
    <property type="match status" value="1"/>
</dbReference>
<dbReference type="Gene3D" id="3.30.60.20">
    <property type="match status" value="1"/>
</dbReference>
<dbReference type="Gene3D" id="3.40.50.300">
    <property type="entry name" value="P-loop containing nucleotide triphosphate hydrolases"/>
    <property type="match status" value="1"/>
</dbReference>
<dbReference type="HAMAP" id="MF_00124">
    <property type="entry name" value="Thymidine_kinase"/>
    <property type="match status" value="1"/>
</dbReference>
<dbReference type="InterPro" id="IPR027417">
    <property type="entry name" value="P-loop_NTPase"/>
</dbReference>
<dbReference type="InterPro" id="IPR001267">
    <property type="entry name" value="Thymidine_kinase"/>
</dbReference>
<dbReference type="InterPro" id="IPR020633">
    <property type="entry name" value="Thymidine_kinase_CS"/>
</dbReference>
<dbReference type="NCBIfam" id="NF003296">
    <property type="entry name" value="PRK04296.1-1"/>
    <property type="match status" value="1"/>
</dbReference>
<dbReference type="PANTHER" id="PTHR11441">
    <property type="entry name" value="THYMIDINE KINASE"/>
    <property type="match status" value="1"/>
</dbReference>
<dbReference type="PANTHER" id="PTHR11441:SF0">
    <property type="entry name" value="THYMIDINE KINASE, CYTOSOLIC"/>
    <property type="match status" value="1"/>
</dbReference>
<dbReference type="Pfam" id="PF00265">
    <property type="entry name" value="TK"/>
    <property type="match status" value="1"/>
</dbReference>
<dbReference type="PIRSF" id="PIRSF035805">
    <property type="entry name" value="TK_cell"/>
    <property type="match status" value="1"/>
</dbReference>
<dbReference type="SUPFAM" id="SSF57716">
    <property type="entry name" value="Glucocorticoid receptor-like (DNA-binding domain)"/>
    <property type="match status" value="1"/>
</dbReference>
<dbReference type="SUPFAM" id="SSF52540">
    <property type="entry name" value="P-loop containing nucleoside triphosphate hydrolases"/>
    <property type="match status" value="1"/>
</dbReference>
<dbReference type="PROSITE" id="PS00603">
    <property type="entry name" value="TK_CELLULAR_TYPE"/>
    <property type="match status" value="1"/>
</dbReference>
<feature type="chain" id="PRO_1000095430" description="Thymidine kinase">
    <location>
        <begin position="1"/>
        <end position="191"/>
    </location>
</feature>
<feature type="active site" description="Proton acceptor" evidence="1">
    <location>
        <position position="89"/>
    </location>
</feature>
<feature type="binding site" evidence="1">
    <location>
        <begin position="15"/>
        <end position="22"/>
    </location>
    <ligand>
        <name>ATP</name>
        <dbReference type="ChEBI" id="CHEBI:30616"/>
    </ligand>
</feature>
<feature type="binding site" evidence="1">
    <location>
        <begin position="88"/>
        <end position="91"/>
    </location>
    <ligand>
        <name>ATP</name>
        <dbReference type="ChEBI" id="CHEBI:30616"/>
    </ligand>
</feature>
<feature type="binding site" evidence="1">
    <location>
        <position position="145"/>
    </location>
    <ligand>
        <name>Zn(2+)</name>
        <dbReference type="ChEBI" id="CHEBI:29105"/>
    </ligand>
</feature>
<feature type="binding site" evidence="1">
    <location>
        <position position="148"/>
    </location>
    <ligand>
        <name>Zn(2+)</name>
        <dbReference type="ChEBI" id="CHEBI:29105"/>
    </ligand>
</feature>
<feature type="binding site" evidence="1">
    <location>
        <position position="183"/>
    </location>
    <ligand>
        <name>Zn(2+)</name>
        <dbReference type="ChEBI" id="CHEBI:29105"/>
    </ligand>
</feature>
<feature type="binding site" evidence="1">
    <location>
        <position position="186"/>
    </location>
    <ligand>
        <name>Zn(2+)</name>
        <dbReference type="ChEBI" id="CHEBI:29105"/>
    </ligand>
</feature>
<evidence type="ECO:0000255" key="1">
    <source>
        <dbReference type="HAMAP-Rule" id="MF_00124"/>
    </source>
</evidence>
<reference key="1">
    <citation type="journal article" date="2007" name="PLoS ONE">
        <title>Analysis of the neurotoxin complex genes in Clostridium botulinum A1-A4 and B1 strains: BoNT/A3, /Ba4 and /B1 clusters are located within plasmids.</title>
        <authorList>
            <person name="Smith T.J."/>
            <person name="Hill K.K."/>
            <person name="Foley B.T."/>
            <person name="Detter J.C."/>
            <person name="Munk A.C."/>
            <person name="Bruce D.C."/>
            <person name="Doggett N.A."/>
            <person name="Smith L.A."/>
            <person name="Marks J.D."/>
            <person name="Xie G."/>
            <person name="Brettin T.S."/>
        </authorList>
    </citation>
    <scope>NUCLEOTIDE SEQUENCE [LARGE SCALE GENOMIC DNA]</scope>
    <source>
        <strain>Loch Maree / Type A3</strain>
    </source>
</reference>
<name>KITH_CLOBM</name>
<organism>
    <name type="scientific">Clostridium botulinum (strain Loch Maree / Type A3)</name>
    <dbReference type="NCBI Taxonomy" id="498214"/>
    <lineage>
        <taxon>Bacteria</taxon>
        <taxon>Bacillati</taxon>
        <taxon>Bacillota</taxon>
        <taxon>Clostridia</taxon>
        <taxon>Eubacteriales</taxon>
        <taxon>Clostridiaceae</taxon>
        <taxon>Clostridium</taxon>
    </lineage>
</organism>
<gene>
    <name evidence="1" type="primary">tdk</name>
    <name type="ordered locus">CLK_3311</name>
</gene>
<sequence length="191" mass="21485">MYGPKDHGWIEVVAGPMYSGKTEELIRRIRRAEIAKQKVQVFKPEIDNRYSKQDVVSHAGDKIQSVPVRSSKEILEKLLDDTDVIGIDEAQFFDDSLVEIVSKIANNNRRVICAGLDMDFKGEPFGPMPKLMAIAEFVDKIQAVCMVCNNPATRTQRLINGKPAKKSDPVVLIGAQESYEARCRKCHRVPK</sequence>
<protein>
    <recommendedName>
        <fullName evidence="1">Thymidine kinase</fullName>
        <ecNumber evidence="1">2.7.1.21</ecNumber>
    </recommendedName>
</protein>
<keyword id="KW-0067">ATP-binding</keyword>
<keyword id="KW-0963">Cytoplasm</keyword>
<keyword id="KW-0237">DNA synthesis</keyword>
<keyword id="KW-0418">Kinase</keyword>
<keyword id="KW-0479">Metal-binding</keyword>
<keyword id="KW-0547">Nucleotide-binding</keyword>
<keyword id="KW-0808">Transferase</keyword>
<keyword id="KW-0862">Zinc</keyword>
<comment type="catalytic activity">
    <reaction evidence="1">
        <text>thymidine + ATP = dTMP + ADP + H(+)</text>
        <dbReference type="Rhea" id="RHEA:19129"/>
        <dbReference type="ChEBI" id="CHEBI:15378"/>
        <dbReference type="ChEBI" id="CHEBI:17748"/>
        <dbReference type="ChEBI" id="CHEBI:30616"/>
        <dbReference type="ChEBI" id="CHEBI:63528"/>
        <dbReference type="ChEBI" id="CHEBI:456216"/>
        <dbReference type="EC" id="2.7.1.21"/>
    </reaction>
</comment>
<comment type="subunit">
    <text evidence="1">Homotetramer.</text>
</comment>
<comment type="subcellular location">
    <subcellularLocation>
        <location evidence="1">Cytoplasm</location>
    </subcellularLocation>
</comment>
<comment type="similarity">
    <text evidence="1">Belongs to the thymidine kinase family.</text>
</comment>